<comment type="function">
    <text evidence="1">Binds 23S rRNA and is also seen to make contacts with the A and possibly P site tRNAs.</text>
</comment>
<comment type="subunit">
    <text evidence="1">Part of the 50S ribosomal subunit.</text>
</comment>
<comment type="similarity">
    <text evidence="1">Belongs to the universal ribosomal protein uL16 family.</text>
</comment>
<organism>
    <name type="scientific">Escherichia coli O45:K1 (strain S88 / ExPEC)</name>
    <dbReference type="NCBI Taxonomy" id="585035"/>
    <lineage>
        <taxon>Bacteria</taxon>
        <taxon>Pseudomonadati</taxon>
        <taxon>Pseudomonadota</taxon>
        <taxon>Gammaproteobacteria</taxon>
        <taxon>Enterobacterales</taxon>
        <taxon>Enterobacteriaceae</taxon>
        <taxon>Escherichia</taxon>
    </lineage>
</organism>
<reference key="1">
    <citation type="journal article" date="2009" name="PLoS Genet.">
        <title>Organised genome dynamics in the Escherichia coli species results in highly diverse adaptive paths.</title>
        <authorList>
            <person name="Touchon M."/>
            <person name="Hoede C."/>
            <person name="Tenaillon O."/>
            <person name="Barbe V."/>
            <person name="Baeriswyl S."/>
            <person name="Bidet P."/>
            <person name="Bingen E."/>
            <person name="Bonacorsi S."/>
            <person name="Bouchier C."/>
            <person name="Bouvet O."/>
            <person name="Calteau A."/>
            <person name="Chiapello H."/>
            <person name="Clermont O."/>
            <person name="Cruveiller S."/>
            <person name="Danchin A."/>
            <person name="Diard M."/>
            <person name="Dossat C."/>
            <person name="Karoui M.E."/>
            <person name="Frapy E."/>
            <person name="Garry L."/>
            <person name="Ghigo J.M."/>
            <person name="Gilles A.M."/>
            <person name="Johnson J."/>
            <person name="Le Bouguenec C."/>
            <person name="Lescat M."/>
            <person name="Mangenot S."/>
            <person name="Martinez-Jehanne V."/>
            <person name="Matic I."/>
            <person name="Nassif X."/>
            <person name="Oztas S."/>
            <person name="Petit M.A."/>
            <person name="Pichon C."/>
            <person name="Rouy Z."/>
            <person name="Ruf C.S."/>
            <person name="Schneider D."/>
            <person name="Tourret J."/>
            <person name="Vacherie B."/>
            <person name="Vallenet D."/>
            <person name="Medigue C."/>
            <person name="Rocha E.P.C."/>
            <person name="Denamur E."/>
        </authorList>
    </citation>
    <scope>NUCLEOTIDE SEQUENCE [LARGE SCALE GENOMIC DNA]</scope>
    <source>
        <strain>S88 / ExPEC</strain>
    </source>
</reference>
<keyword id="KW-1185">Reference proteome</keyword>
<keyword id="KW-0687">Ribonucleoprotein</keyword>
<keyword id="KW-0689">Ribosomal protein</keyword>
<keyword id="KW-0694">RNA-binding</keyword>
<keyword id="KW-0699">rRNA-binding</keyword>
<keyword id="KW-0820">tRNA-binding</keyword>
<feature type="chain" id="PRO_1000142963" description="Large ribosomal subunit protein uL16">
    <location>
        <begin position="1"/>
        <end position="136"/>
    </location>
</feature>
<protein>
    <recommendedName>
        <fullName evidence="1">Large ribosomal subunit protein uL16</fullName>
    </recommendedName>
    <alternativeName>
        <fullName evidence="2">50S ribosomal protein L16</fullName>
    </alternativeName>
</protein>
<name>RL16_ECO45</name>
<sequence length="136" mass="15281">MLQPKRTKFRKMHKGRNRGLAQGTDVSFGSFGLKAVGRGRLTARQIEAARRAMTRAVKRQGKIWIRVFPDKPITEKPLAVRMGKGKGNVEYWVALIQPGKVLYEMDGVPEELAREAFKLAAAKLPIKTTFVTKTVM</sequence>
<proteinExistence type="inferred from homology"/>
<dbReference type="EMBL" id="CU928161">
    <property type="protein sequence ID" value="CAR04917.1"/>
    <property type="molecule type" value="Genomic_DNA"/>
</dbReference>
<dbReference type="RefSeq" id="WP_000941212.1">
    <property type="nucleotide sequence ID" value="NC_011742.1"/>
</dbReference>
<dbReference type="EMDB" id="EMD-7970"/>
<dbReference type="EMDB" id="EMD-8826"/>
<dbReference type="EMDB" id="EMD-8829"/>
<dbReference type="SMR" id="B7MCS8"/>
<dbReference type="IntAct" id="B7MCS8">
    <property type="interactions" value="1"/>
</dbReference>
<dbReference type="GeneID" id="93778674"/>
<dbReference type="KEGG" id="ecz:ECS88_3700"/>
<dbReference type="HOGENOM" id="CLU_078858_2_1_6"/>
<dbReference type="Proteomes" id="UP000000747">
    <property type="component" value="Chromosome"/>
</dbReference>
<dbReference type="GO" id="GO:0022625">
    <property type="term" value="C:cytosolic large ribosomal subunit"/>
    <property type="evidence" value="ECO:0007669"/>
    <property type="project" value="TreeGrafter"/>
</dbReference>
<dbReference type="GO" id="GO:0019843">
    <property type="term" value="F:rRNA binding"/>
    <property type="evidence" value="ECO:0007669"/>
    <property type="project" value="UniProtKB-UniRule"/>
</dbReference>
<dbReference type="GO" id="GO:0003735">
    <property type="term" value="F:structural constituent of ribosome"/>
    <property type="evidence" value="ECO:0007669"/>
    <property type="project" value="InterPro"/>
</dbReference>
<dbReference type="GO" id="GO:0000049">
    <property type="term" value="F:tRNA binding"/>
    <property type="evidence" value="ECO:0007669"/>
    <property type="project" value="UniProtKB-KW"/>
</dbReference>
<dbReference type="GO" id="GO:0006412">
    <property type="term" value="P:translation"/>
    <property type="evidence" value="ECO:0007669"/>
    <property type="project" value="UniProtKB-UniRule"/>
</dbReference>
<dbReference type="CDD" id="cd01433">
    <property type="entry name" value="Ribosomal_L16_L10e"/>
    <property type="match status" value="1"/>
</dbReference>
<dbReference type="FunFam" id="3.90.1170.10:FF:000001">
    <property type="entry name" value="50S ribosomal protein L16"/>
    <property type="match status" value="1"/>
</dbReference>
<dbReference type="Gene3D" id="3.90.1170.10">
    <property type="entry name" value="Ribosomal protein L10e/L16"/>
    <property type="match status" value="1"/>
</dbReference>
<dbReference type="HAMAP" id="MF_01342">
    <property type="entry name" value="Ribosomal_uL16"/>
    <property type="match status" value="1"/>
</dbReference>
<dbReference type="InterPro" id="IPR047873">
    <property type="entry name" value="Ribosomal_uL16"/>
</dbReference>
<dbReference type="InterPro" id="IPR000114">
    <property type="entry name" value="Ribosomal_uL16_bact-type"/>
</dbReference>
<dbReference type="InterPro" id="IPR020798">
    <property type="entry name" value="Ribosomal_uL16_CS"/>
</dbReference>
<dbReference type="InterPro" id="IPR016180">
    <property type="entry name" value="Ribosomal_uL16_dom"/>
</dbReference>
<dbReference type="InterPro" id="IPR036920">
    <property type="entry name" value="Ribosomal_uL16_sf"/>
</dbReference>
<dbReference type="NCBIfam" id="TIGR01164">
    <property type="entry name" value="rplP_bact"/>
    <property type="match status" value="1"/>
</dbReference>
<dbReference type="PANTHER" id="PTHR12220">
    <property type="entry name" value="50S/60S RIBOSOMAL PROTEIN L16"/>
    <property type="match status" value="1"/>
</dbReference>
<dbReference type="PANTHER" id="PTHR12220:SF13">
    <property type="entry name" value="LARGE RIBOSOMAL SUBUNIT PROTEIN UL16M"/>
    <property type="match status" value="1"/>
</dbReference>
<dbReference type="Pfam" id="PF00252">
    <property type="entry name" value="Ribosomal_L16"/>
    <property type="match status" value="1"/>
</dbReference>
<dbReference type="PRINTS" id="PR00060">
    <property type="entry name" value="RIBOSOMALL16"/>
</dbReference>
<dbReference type="SUPFAM" id="SSF54686">
    <property type="entry name" value="Ribosomal protein L16p/L10e"/>
    <property type="match status" value="1"/>
</dbReference>
<dbReference type="PROSITE" id="PS00586">
    <property type="entry name" value="RIBOSOMAL_L16_1"/>
    <property type="match status" value="1"/>
</dbReference>
<dbReference type="PROSITE" id="PS00701">
    <property type="entry name" value="RIBOSOMAL_L16_2"/>
    <property type="match status" value="1"/>
</dbReference>
<accession>B7MCS8</accession>
<evidence type="ECO:0000255" key="1">
    <source>
        <dbReference type="HAMAP-Rule" id="MF_01342"/>
    </source>
</evidence>
<evidence type="ECO:0000305" key="2"/>
<gene>
    <name evidence="1" type="primary">rplP</name>
    <name type="ordered locus">ECS88_3700</name>
</gene>